<protein>
    <recommendedName>
        <fullName evidence="1">ATP synthase subunit alpha</fullName>
        <ecNumber evidence="1">7.1.2.2</ecNumber>
    </recommendedName>
    <alternativeName>
        <fullName evidence="1">ATP synthase F1 sector subunit alpha</fullName>
    </alternativeName>
    <alternativeName>
        <fullName evidence="1">F-ATPase subunit alpha</fullName>
    </alternativeName>
</protein>
<feature type="chain" id="PRO_1000055057" description="ATP synthase subunit alpha">
    <location>
        <begin position="1"/>
        <end position="505"/>
    </location>
</feature>
<feature type="binding site" evidence="1">
    <location>
        <begin position="171"/>
        <end position="178"/>
    </location>
    <ligand>
        <name>ATP</name>
        <dbReference type="ChEBI" id="CHEBI:30616"/>
    </ligand>
</feature>
<feature type="site" description="Required for activity" evidence="1">
    <location>
        <position position="364"/>
    </location>
</feature>
<keyword id="KW-0066">ATP synthesis</keyword>
<keyword id="KW-0067">ATP-binding</keyword>
<keyword id="KW-0997">Cell inner membrane</keyword>
<keyword id="KW-1003">Cell membrane</keyword>
<keyword id="KW-0139">CF(1)</keyword>
<keyword id="KW-0375">Hydrogen ion transport</keyword>
<keyword id="KW-0406">Ion transport</keyword>
<keyword id="KW-0472">Membrane</keyword>
<keyword id="KW-0547">Nucleotide-binding</keyword>
<keyword id="KW-1185">Reference proteome</keyword>
<keyword id="KW-1278">Translocase</keyword>
<keyword id="KW-0813">Transport</keyword>
<gene>
    <name evidence="1" type="primary">atpA</name>
    <name type="ordered locus">Ccur92_15070</name>
    <name type="ORF">CCV52592_1736</name>
</gene>
<sequence>MSAKIKADEISAIIKERIENFDLSVDVEETGKVISVADGVANVYGLKNIMAGEMVEFEGGEKGMALNLEESSVGIVILGKTSGITEGSSVKRLKKLLRVPVGDALIGRVVNSLGEPIDAKGPIEATETRFVEEKAKGIMARKSVHEPLQTGIKAIDALVPIGRGQRELIIGDRQTGKTTVAIDTIINQKGQDVICIYVAIGQKQSTVAQVVKKLEEYGAMDYTIVVNAGASDTAALQYLAPYAGVTMGEYFRDNSRHALIIYDDLSKHAVAYREMSLILRRPPGREAYPGDVFYLHSRLLERASKLNDALGAGSLTALPIIETQAGDVSAYIPTNVISITDGQIFLESDLFNSGIRPAINVGLSVSRVGGAAQIKATKQVSGNLRLDLAQYRELQAFAQFASDLDESSRKQLERGQKMVEVLKQPPYSPLPVENQVVIIFAGSKGYLDDIAAASVTKFEAELYPYIEAKYPEIFEQIRTKKVLDKEIEELLHKALKDFKATFSVA</sequence>
<organism>
    <name type="scientific">Campylobacter curvus (strain 525.92)</name>
    <dbReference type="NCBI Taxonomy" id="360105"/>
    <lineage>
        <taxon>Bacteria</taxon>
        <taxon>Pseudomonadati</taxon>
        <taxon>Campylobacterota</taxon>
        <taxon>Epsilonproteobacteria</taxon>
        <taxon>Campylobacterales</taxon>
        <taxon>Campylobacteraceae</taxon>
        <taxon>Campylobacter</taxon>
    </lineage>
</organism>
<reference key="1">
    <citation type="submission" date="2007-07" db="EMBL/GenBank/DDBJ databases">
        <title>Genome sequence of Campylobacter curvus 525.92 isolated from human feces.</title>
        <authorList>
            <person name="Fouts D.E."/>
            <person name="Mongodin E.F."/>
            <person name="Puiu D."/>
            <person name="Sebastian Y."/>
            <person name="Miller W.G."/>
            <person name="Mandrell R.E."/>
            <person name="Lastovica A.J."/>
            <person name="Nelson K.E."/>
        </authorList>
    </citation>
    <scope>NUCLEOTIDE SEQUENCE [LARGE SCALE GENOMIC DNA]</scope>
    <source>
        <strain>525.92</strain>
    </source>
</reference>
<accession>A7H019</accession>
<proteinExistence type="inferred from homology"/>
<dbReference type="EC" id="7.1.2.2" evidence="1"/>
<dbReference type="EMBL" id="CP000767">
    <property type="protein sequence ID" value="EAU01020.1"/>
    <property type="molecule type" value="Genomic_DNA"/>
</dbReference>
<dbReference type="RefSeq" id="WP_011992636.1">
    <property type="nucleotide sequence ID" value="NC_009715.2"/>
</dbReference>
<dbReference type="SMR" id="A7H019"/>
<dbReference type="STRING" id="360105.CCV52592_1736"/>
<dbReference type="KEGG" id="ccv:CCV52592_1736"/>
<dbReference type="HOGENOM" id="CLU_010091_2_1_7"/>
<dbReference type="OrthoDB" id="9803053at2"/>
<dbReference type="Proteomes" id="UP000006380">
    <property type="component" value="Chromosome"/>
</dbReference>
<dbReference type="GO" id="GO:0005886">
    <property type="term" value="C:plasma membrane"/>
    <property type="evidence" value="ECO:0007669"/>
    <property type="project" value="UniProtKB-SubCell"/>
</dbReference>
<dbReference type="GO" id="GO:0045259">
    <property type="term" value="C:proton-transporting ATP synthase complex"/>
    <property type="evidence" value="ECO:0007669"/>
    <property type="project" value="UniProtKB-KW"/>
</dbReference>
<dbReference type="GO" id="GO:0043531">
    <property type="term" value="F:ADP binding"/>
    <property type="evidence" value="ECO:0007669"/>
    <property type="project" value="TreeGrafter"/>
</dbReference>
<dbReference type="GO" id="GO:0005524">
    <property type="term" value="F:ATP binding"/>
    <property type="evidence" value="ECO:0007669"/>
    <property type="project" value="UniProtKB-UniRule"/>
</dbReference>
<dbReference type="GO" id="GO:0046933">
    <property type="term" value="F:proton-transporting ATP synthase activity, rotational mechanism"/>
    <property type="evidence" value="ECO:0007669"/>
    <property type="project" value="UniProtKB-UniRule"/>
</dbReference>
<dbReference type="CDD" id="cd18113">
    <property type="entry name" value="ATP-synt_F1_alpha_C"/>
    <property type="match status" value="1"/>
</dbReference>
<dbReference type="CDD" id="cd18116">
    <property type="entry name" value="ATP-synt_F1_alpha_N"/>
    <property type="match status" value="1"/>
</dbReference>
<dbReference type="CDD" id="cd01132">
    <property type="entry name" value="F1-ATPase_alpha_CD"/>
    <property type="match status" value="1"/>
</dbReference>
<dbReference type="FunFam" id="1.20.150.20:FF:000001">
    <property type="entry name" value="ATP synthase subunit alpha"/>
    <property type="match status" value="1"/>
</dbReference>
<dbReference type="FunFam" id="2.40.30.20:FF:000001">
    <property type="entry name" value="ATP synthase subunit alpha"/>
    <property type="match status" value="1"/>
</dbReference>
<dbReference type="FunFam" id="3.40.50.300:FF:000002">
    <property type="entry name" value="ATP synthase subunit alpha"/>
    <property type="match status" value="1"/>
</dbReference>
<dbReference type="Gene3D" id="2.40.30.20">
    <property type="match status" value="1"/>
</dbReference>
<dbReference type="Gene3D" id="1.20.150.20">
    <property type="entry name" value="ATP synthase alpha/beta chain, C-terminal domain"/>
    <property type="match status" value="1"/>
</dbReference>
<dbReference type="Gene3D" id="3.40.50.300">
    <property type="entry name" value="P-loop containing nucleotide triphosphate hydrolases"/>
    <property type="match status" value="1"/>
</dbReference>
<dbReference type="HAMAP" id="MF_01346">
    <property type="entry name" value="ATP_synth_alpha_bact"/>
    <property type="match status" value="1"/>
</dbReference>
<dbReference type="InterPro" id="IPR023366">
    <property type="entry name" value="ATP_synth_asu-like_sf"/>
</dbReference>
<dbReference type="InterPro" id="IPR000793">
    <property type="entry name" value="ATP_synth_asu_C"/>
</dbReference>
<dbReference type="InterPro" id="IPR038376">
    <property type="entry name" value="ATP_synth_asu_C_sf"/>
</dbReference>
<dbReference type="InterPro" id="IPR033732">
    <property type="entry name" value="ATP_synth_F1_a_nt-bd_dom"/>
</dbReference>
<dbReference type="InterPro" id="IPR005294">
    <property type="entry name" value="ATP_synth_F1_asu"/>
</dbReference>
<dbReference type="InterPro" id="IPR020003">
    <property type="entry name" value="ATPase_a/bsu_AS"/>
</dbReference>
<dbReference type="InterPro" id="IPR004100">
    <property type="entry name" value="ATPase_F1/V1/A1_a/bsu_N"/>
</dbReference>
<dbReference type="InterPro" id="IPR036121">
    <property type="entry name" value="ATPase_F1/V1/A1_a/bsu_N_sf"/>
</dbReference>
<dbReference type="InterPro" id="IPR000194">
    <property type="entry name" value="ATPase_F1/V1/A1_a/bsu_nucl-bd"/>
</dbReference>
<dbReference type="InterPro" id="IPR027417">
    <property type="entry name" value="P-loop_NTPase"/>
</dbReference>
<dbReference type="NCBIfam" id="TIGR00962">
    <property type="entry name" value="atpA"/>
    <property type="match status" value="1"/>
</dbReference>
<dbReference type="NCBIfam" id="NF009884">
    <property type="entry name" value="PRK13343.1"/>
    <property type="match status" value="1"/>
</dbReference>
<dbReference type="PANTHER" id="PTHR48082">
    <property type="entry name" value="ATP SYNTHASE SUBUNIT ALPHA, MITOCHONDRIAL"/>
    <property type="match status" value="1"/>
</dbReference>
<dbReference type="PANTHER" id="PTHR48082:SF2">
    <property type="entry name" value="ATP SYNTHASE SUBUNIT ALPHA, MITOCHONDRIAL"/>
    <property type="match status" value="1"/>
</dbReference>
<dbReference type="Pfam" id="PF00006">
    <property type="entry name" value="ATP-synt_ab"/>
    <property type="match status" value="1"/>
</dbReference>
<dbReference type="Pfam" id="PF00306">
    <property type="entry name" value="ATP-synt_ab_C"/>
    <property type="match status" value="1"/>
</dbReference>
<dbReference type="Pfam" id="PF02874">
    <property type="entry name" value="ATP-synt_ab_N"/>
    <property type="match status" value="1"/>
</dbReference>
<dbReference type="PIRSF" id="PIRSF039088">
    <property type="entry name" value="F_ATPase_subunit_alpha"/>
    <property type="match status" value="1"/>
</dbReference>
<dbReference type="SUPFAM" id="SSF47917">
    <property type="entry name" value="C-terminal domain of alpha and beta subunits of F1 ATP synthase"/>
    <property type="match status" value="1"/>
</dbReference>
<dbReference type="SUPFAM" id="SSF50615">
    <property type="entry name" value="N-terminal domain of alpha and beta subunits of F1 ATP synthase"/>
    <property type="match status" value="1"/>
</dbReference>
<dbReference type="SUPFAM" id="SSF52540">
    <property type="entry name" value="P-loop containing nucleoside triphosphate hydrolases"/>
    <property type="match status" value="1"/>
</dbReference>
<dbReference type="PROSITE" id="PS00152">
    <property type="entry name" value="ATPASE_ALPHA_BETA"/>
    <property type="match status" value="1"/>
</dbReference>
<name>ATPA_CAMC5</name>
<comment type="function">
    <text evidence="1">Produces ATP from ADP in the presence of a proton gradient across the membrane. The alpha chain is a regulatory subunit.</text>
</comment>
<comment type="catalytic activity">
    <reaction evidence="1">
        <text>ATP + H2O + 4 H(+)(in) = ADP + phosphate + 5 H(+)(out)</text>
        <dbReference type="Rhea" id="RHEA:57720"/>
        <dbReference type="ChEBI" id="CHEBI:15377"/>
        <dbReference type="ChEBI" id="CHEBI:15378"/>
        <dbReference type="ChEBI" id="CHEBI:30616"/>
        <dbReference type="ChEBI" id="CHEBI:43474"/>
        <dbReference type="ChEBI" id="CHEBI:456216"/>
        <dbReference type="EC" id="7.1.2.2"/>
    </reaction>
</comment>
<comment type="subunit">
    <text evidence="1">F-type ATPases have 2 components, CF(1) - the catalytic core - and CF(0) - the membrane proton channel. CF(1) has five subunits: alpha(3), beta(3), gamma(1), delta(1), epsilon(1). CF(0) has three main subunits: a(1), b(2) and c(9-12). The alpha and beta chains form an alternating ring which encloses part of the gamma chain. CF(1) is attached to CF(0) by a central stalk formed by the gamma and epsilon chains, while a peripheral stalk is formed by the delta and b chains.</text>
</comment>
<comment type="subcellular location">
    <subcellularLocation>
        <location evidence="1">Cell inner membrane</location>
        <topology evidence="1">Peripheral membrane protein</topology>
    </subcellularLocation>
</comment>
<comment type="similarity">
    <text evidence="1">Belongs to the ATPase alpha/beta chains family.</text>
</comment>
<evidence type="ECO:0000255" key="1">
    <source>
        <dbReference type="HAMAP-Rule" id="MF_01346"/>
    </source>
</evidence>